<accession>Q9K716</accession>
<gene>
    <name evidence="1" type="primary">gpmI</name>
    <name type="synonym">pgm</name>
    <name type="ordered locus">BH3557</name>
</gene>
<feature type="chain" id="PRO_0000212124" description="2,3-bisphosphoglycerate-independent phosphoglycerate mutase">
    <location>
        <begin position="1"/>
        <end position="510"/>
    </location>
</feature>
<feature type="active site" description="Phosphoserine intermediate" evidence="1">
    <location>
        <position position="62"/>
    </location>
</feature>
<feature type="binding site" evidence="1">
    <location>
        <position position="12"/>
    </location>
    <ligand>
        <name>Mn(2+)</name>
        <dbReference type="ChEBI" id="CHEBI:29035"/>
        <label>2</label>
    </ligand>
</feature>
<feature type="binding site" evidence="1">
    <location>
        <position position="62"/>
    </location>
    <ligand>
        <name>Mn(2+)</name>
        <dbReference type="ChEBI" id="CHEBI:29035"/>
        <label>2</label>
    </ligand>
</feature>
<feature type="binding site" evidence="1">
    <location>
        <position position="123"/>
    </location>
    <ligand>
        <name>substrate</name>
    </ligand>
</feature>
<feature type="binding site" evidence="1">
    <location>
        <begin position="153"/>
        <end position="154"/>
    </location>
    <ligand>
        <name>substrate</name>
    </ligand>
</feature>
<feature type="binding site" evidence="1">
    <location>
        <position position="185"/>
    </location>
    <ligand>
        <name>substrate</name>
    </ligand>
</feature>
<feature type="binding site" evidence="1">
    <location>
        <position position="191"/>
    </location>
    <ligand>
        <name>substrate</name>
    </ligand>
</feature>
<feature type="binding site" evidence="1">
    <location>
        <begin position="261"/>
        <end position="264"/>
    </location>
    <ligand>
        <name>substrate</name>
    </ligand>
</feature>
<feature type="binding site" evidence="1">
    <location>
        <position position="336"/>
    </location>
    <ligand>
        <name>substrate</name>
    </ligand>
</feature>
<feature type="binding site" evidence="1">
    <location>
        <position position="403"/>
    </location>
    <ligand>
        <name>Mn(2+)</name>
        <dbReference type="ChEBI" id="CHEBI:29035"/>
        <label>1</label>
    </ligand>
</feature>
<feature type="binding site" evidence="1">
    <location>
        <position position="407"/>
    </location>
    <ligand>
        <name>Mn(2+)</name>
        <dbReference type="ChEBI" id="CHEBI:29035"/>
        <label>1</label>
    </ligand>
</feature>
<feature type="binding site" evidence="1">
    <location>
        <position position="444"/>
    </location>
    <ligand>
        <name>Mn(2+)</name>
        <dbReference type="ChEBI" id="CHEBI:29035"/>
        <label>2</label>
    </ligand>
</feature>
<feature type="binding site" evidence="1">
    <location>
        <position position="445"/>
    </location>
    <ligand>
        <name>Mn(2+)</name>
        <dbReference type="ChEBI" id="CHEBI:29035"/>
        <label>2</label>
    </ligand>
</feature>
<feature type="binding site" evidence="1">
    <location>
        <position position="462"/>
    </location>
    <ligand>
        <name>Mn(2+)</name>
        <dbReference type="ChEBI" id="CHEBI:29035"/>
        <label>1</label>
    </ligand>
</feature>
<feature type="modified residue" description="Phosphotyrosine" evidence="1">
    <location>
        <position position="36"/>
    </location>
</feature>
<keyword id="KW-0324">Glycolysis</keyword>
<keyword id="KW-0413">Isomerase</keyword>
<keyword id="KW-0464">Manganese</keyword>
<keyword id="KW-0479">Metal-binding</keyword>
<keyword id="KW-0597">Phosphoprotein</keyword>
<keyword id="KW-1185">Reference proteome</keyword>
<keyword id="KW-0749">Sporulation</keyword>
<name>GPMI_HALH5</name>
<proteinExistence type="inferred from homology"/>
<dbReference type="EC" id="5.4.2.12" evidence="1"/>
<dbReference type="EMBL" id="BA000004">
    <property type="protein sequence ID" value="BAB07276.1"/>
    <property type="molecule type" value="Genomic_DNA"/>
</dbReference>
<dbReference type="PIR" id="E84094">
    <property type="entry name" value="E84094"/>
</dbReference>
<dbReference type="RefSeq" id="WP_010899686.1">
    <property type="nucleotide sequence ID" value="NC_002570.2"/>
</dbReference>
<dbReference type="SMR" id="Q9K716"/>
<dbReference type="STRING" id="272558.gene:10729470"/>
<dbReference type="KEGG" id="bha:BH3557"/>
<dbReference type="eggNOG" id="COG0696">
    <property type="taxonomic scope" value="Bacteria"/>
</dbReference>
<dbReference type="HOGENOM" id="CLU_026099_2_0_9"/>
<dbReference type="OrthoDB" id="9800863at2"/>
<dbReference type="UniPathway" id="UPA00109">
    <property type="reaction ID" value="UER00186"/>
</dbReference>
<dbReference type="Proteomes" id="UP000001258">
    <property type="component" value="Chromosome"/>
</dbReference>
<dbReference type="GO" id="GO:0005829">
    <property type="term" value="C:cytosol"/>
    <property type="evidence" value="ECO:0007669"/>
    <property type="project" value="TreeGrafter"/>
</dbReference>
<dbReference type="GO" id="GO:0030145">
    <property type="term" value="F:manganese ion binding"/>
    <property type="evidence" value="ECO:0007669"/>
    <property type="project" value="UniProtKB-UniRule"/>
</dbReference>
<dbReference type="GO" id="GO:0004619">
    <property type="term" value="F:phosphoglycerate mutase activity"/>
    <property type="evidence" value="ECO:0007669"/>
    <property type="project" value="UniProtKB-EC"/>
</dbReference>
<dbReference type="GO" id="GO:0006007">
    <property type="term" value="P:glucose catabolic process"/>
    <property type="evidence" value="ECO:0007669"/>
    <property type="project" value="InterPro"/>
</dbReference>
<dbReference type="GO" id="GO:0006096">
    <property type="term" value="P:glycolytic process"/>
    <property type="evidence" value="ECO:0007669"/>
    <property type="project" value="UniProtKB-UniRule"/>
</dbReference>
<dbReference type="GO" id="GO:0030435">
    <property type="term" value="P:sporulation resulting in formation of a cellular spore"/>
    <property type="evidence" value="ECO:0007669"/>
    <property type="project" value="UniProtKB-KW"/>
</dbReference>
<dbReference type="CDD" id="cd16010">
    <property type="entry name" value="iPGM"/>
    <property type="match status" value="1"/>
</dbReference>
<dbReference type="FunFam" id="3.40.1450.10:FF:000001">
    <property type="entry name" value="2,3-bisphosphoglycerate-independent phosphoglycerate mutase"/>
    <property type="match status" value="1"/>
</dbReference>
<dbReference type="FunFam" id="3.40.720.10:FF:000001">
    <property type="entry name" value="2,3-bisphosphoglycerate-independent phosphoglycerate mutase"/>
    <property type="match status" value="1"/>
</dbReference>
<dbReference type="Gene3D" id="3.40.720.10">
    <property type="entry name" value="Alkaline Phosphatase, subunit A"/>
    <property type="match status" value="1"/>
</dbReference>
<dbReference type="Gene3D" id="3.40.1450.10">
    <property type="entry name" value="BPG-independent phosphoglycerate mutase, domain B"/>
    <property type="match status" value="1"/>
</dbReference>
<dbReference type="HAMAP" id="MF_01038">
    <property type="entry name" value="GpmI"/>
    <property type="match status" value="1"/>
</dbReference>
<dbReference type="InterPro" id="IPR017850">
    <property type="entry name" value="Alkaline_phosphatase_core_sf"/>
</dbReference>
<dbReference type="InterPro" id="IPR011258">
    <property type="entry name" value="BPG-indep_PGM_N"/>
</dbReference>
<dbReference type="InterPro" id="IPR006124">
    <property type="entry name" value="Metalloenzyme"/>
</dbReference>
<dbReference type="InterPro" id="IPR036646">
    <property type="entry name" value="PGAM_B_sf"/>
</dbReference>
<dbReference type="InterPro" id="IPR005995">
    <property type="entry name" value="Pgm_bpd_ind"/>
</dbReference>
<dbReference type="NCBIfam" id="TIGR01307">
    <property type="entry name" value="pgm_bpd_ind"/>
    <property type="match status" value="1"/>
</dbReference>
<dbReference type="PANTHER" id="PTHR31637">
    <property type="entry name" value="2,3-BISPHOSPHOGLYCERATE-INDEPENDENT PHOSPHOGLYCERATE MUTASE"/>
    <property type="match status" value="1"/>
</dbReference>
<dbReference type="PANTHER" id="PTHR31637:SF0">
    <property type="entry name" value="2,3-BISPHOSPHOGLYCERATE-INDEPENDENT PHOSPHOGLYCERATE MUTASE"/>
    <property type="match status" value="1"/>
</dbReference>
<dbReference type="Pfam" id="PF06415">
    <property type="entry name" value="iPGM_N"/>
    <property type="match status" value="1"/>
</dbReference>
<dbReference type="Pfam" id="PF01676">
    <property type="entry name" value="Metalloenzyme"/>
    <property type="match status" value="1"/>
</dbReference>
<dbReference type="PIRSF" id="PIRSF001492">
    <property type="entry name" value="IPGAM"/>
    <property type="match status" value="1"/>
</dbReference>
<dbReference type="SUPFAM" id="SSF64158">
    <property type="entry name" value="2,3-Bisphosphoglycerate-independent phosphoglycerate mutase, substrate-binding domain"/>
    <property type="match status" value="1"/>
</dbReference>
<dbReference type="SUPFAM" id="SSF53649">
    <property type="entry name" value="Alkaline phosphatase-like"/>
    <property type="match status" value="1"/>
</dbReference>
<sequence>MSKKPVALIILDGFAMRDEAKGNAVAQANKPNFDRYWNQYPHALLKADGEAVGLPEGQMGNSEVGHLNIGAGRIVYQSLTRVNLSIREGEFFENETFLNAMNHVKEKGSSLHIYGLVSDGGIHSHINHLYALLELAKREQVERVYIHGFLDGRDVGPTSAESYLVDLEAKMKELGVGELATLHGRYYAMDRDKRWDRVEKSYRAMVYGEGPAYSSALDVIKDSYENSIHDEFVIPSVITNEDGSPVATIEDDDAIIFFNFRPDRAIQMSQVFTNKDFRGFDRGEKLPQNVYYVCLTHFSETVQGDVAFKPTNLDNTLGEVLAQQNYKQLRIAETEKYPHVTFFFSGGREEPFPGEERILIDSPKVATYDLKPEMSAYEVTDALLNEIEADKHDVIILNFANPDMVGHSGMLEPTIKAVEAVDECLGKVVDAILAKGGAAVITADHGNADEVVTLEGKPMTAHTTNKVPVIVTEEGLNLREDGILADLSPTVLDLLGGKQPAEMTGKTLIK</sequence>
<protein>
    <recommendedName>
        <fullName evidence="1">2,3-bisphosphoglycerate-independent phosphoglycerate mutase</fullName>
        <shortName evidence="1">BPG-independent PGAM</shortName>
        <shortName evidence="1">Phosphoglyceromutase</shortName>
        <shortName evidence="1">iPGM</shortName>
        <ecNumber evidence="1">5.4.2.12</ecNumber>
    </recommendedName>
</protein>
<comment type="function">
    <text evidence="1">Essential for rapid growth and for sporulation. Catalyzes the interconversion of 2-phosphoglycerate and 3-phosphoglycerate.</text>
</comment>
<comment type="catalytic activity">
    <reaction evidence="1">
        <text>(2R)-2-phosphoglycerate = (2R)-3-phosphoglycerate</text>
        <dbReference type="Rhea" id="RHEA:15901"/>
        <dbReference type="ChEBI" id="CHEBI:58272"/>
        <dbReference type="ChEBI" id="CHEBI:58289"/>
        <dbReference type="EC" id="5.4.2.12"/>
    </reaction>
</comment>
<comment type="cofactor">
    <cofactor evidence="1">
        <name>Mn(2+)</name>
        <dbReference type="ChEBI" id="CHEBI:29035"/>
    </cofactor>
    <text evidence="1">Binds 2 manganese ions per subunit.</text>
</comment>
<comment type="pathway">
    <text evidence="1">Carbohydrate degradation; glycolysis; pyruvate from D-glyceraldehyde 3-phosphate: step 3/5.</text>
</comment>
<comment type="subunit">
    <text evidence="1">Monomer.</text>
</comment>
<comment type="similarity">
    <text evidence="1">Belongs to the BPG-independent phosphoglycerate mutase family.</text>
</comment>
<reference key="1">
    <citation type="journal article" date="2000" name="Nucleic Acids Res.">
        <title>Complete genome sequence of the alkaliphilic bacterium Bacillus halodurans and genomic sequence comparison with Bacillus subtilis.</title>
        <authorList>
            <person name="Takami H."/>
            <person name="Nakasone K."/>
            <person name="Takaki Y."/>
            <person name="Maeno G."/>
            <person name="Sasaki R."/>
            <person name="Masui N."/>
            <person name="Fuji F."/>
            <person name="Hirama C."/>
            <person name="Nakamura Y."/>
            <person name="Ogasawara N."/>
            <person name="Kuhara S."/>
            <person name="Horikoshi K."/>
        </authorList>
    </citation>
    <scope>NUCLEOTIDE SEQUENCE [LARGE SCALE GENOMIC DNA]</scope>
    <source>
        <strain>ATCC BAA-125 / DSM 18197 / FERM 7344 / JCM 9153 / C-125</strain>
    </source>
</reference>
<evidence type="ECO:0000255" key="1">
    <source>
        <dbReference type="HAMAP-Rule" id="MF_01038"/>
    </source>
</evidence>
<organism>
    <name type="scientific">Halalkalibacterium halodurans (strain ATCC BAA-125 / DSM 18197 / FERM 7344 / JCM 9153 / C-125)</name>
    <name type="common">Bacillus halodurans</name>
    <dbReference type="NCBI Taxonomy" id="272558"/>
    <lineage>
        <taxon>Bacteria</taxon>
        <taxon>Bacillati</taxon>
        <taxon>Bacillota</taxon>
        <taxon>Bacilli</taxon>
        <taxon>Bacillales</taxon>
        <taxon>Bacillaceae</taxon>
        <taxon>Halalkalibacterium (ex Joshi et al. 2022)</taxon>
    </lineage>
</organism>